<gene>
    <name evidence="1" type="primary">ruvB</name>
    <name type="ordered locus">Noc_0140</name>
</gene>
<name>RUVB_NITOC</name>
<dbReference type="EC" id="3.6.4.-" evidence="1"/>
<dbReference type="EMBL" id="CP000127">
    <property type="protein sequence ID" value="ABA56673.1"/>
    <property type="molecule type" value="Genomic_DNA"/>
</dbReference>
<dbReference type="RefSeq" id="WP_002812141.1">
    <property type="nucleotide sequence ID" value="NC_007484.1"/>
</dbReference>
<dbReference type="SMR" id="Q3JES3"/>
<dbReference type="FunCoup" id="Q3JES3">
    <property type="interactions" value="249"/>
</dbReference>
<dbReference type="STRING" id="323261.Noc_0140"/>
<dbReference type="KEGG" id="noc:Noc_0140"/>
<dbReference type="eggNOG" id="COG2255">
    <property type="taxonomic scope" value="Bacteria"/>
</dbReference>
<dbReference type="HOGENOM" id="CLU_055599_1_0_6"/>
<dbReference type="InParanoid" id="Q3JES3"/>
<dbReference type="Proteomes" id="UP000006838">
    <property type="component" value="Chromosome"/>
</dbReference>
<dbReference type="GO" id="GO:0005737">
    <property type="term" value="C:cytoplasm"/>
    <property type="evidence" value="ECO:0007669"/>
    <property type="project" value="UniProtKB-SubCell"/>
</dbReference>
<dbReference type="GO" id="GO:0048476">
    <property type="term" value="C:Holliday junction resolvase complex"/>
    <property type="evidence" value="ECO:0007669"/>
    <property type="project" value="UniProtKB-UniRule"/>
</dbReference>
<dbReference type="GO" id="GO:0005524">
    <property type="term" value="F:ATP binding"/>
    <property type="evidence" value="ECO:0007669"/>
    <property type="project" value="UniProtKB-UniRule"/>
</dbReference>
<dbReference type="GO" id="GO:0016887">
    <property type="term" value="F:ATP hydrolysis activity"/>
    <property type="evidence" value="ECO:0007669"/>
    <property type="project" value="InterPro"/>
</dbReference>
<dbReference type="GO" id="GO:0000400">
    <property type="term" value="F:four-way junction DNA binding"/>
    <property type="evidence" value="ECO:0007669"/>
    <property type="project" value="UniProtKB-UniRule"/>
</dbReference>
<dbReference type="GO" id="GO:0009378">
    <property type="term" value="F:four-way junction helicase activity"/>
    <property type="evidence" value="ECO:0007669"/>
    <property type="project" value="InterPro"/>
</dbReference>
<dbReference type="GO" id="GO:0006310">
    <property type="term" value="P:DNA recombination"/>
    <property type="evidence" value="ECO:0007669"/>
    <property type="project" value="UniProtKB-UniRule"/>
</dbReference>
<dbReference type="GO" id="GO:0006281">
    <property type="term" value="P:DNA repair"/>
    <property type="evidence" value="ECO:0007669"/>
    <property type="project" value="UniProtKB-UniRule"/>
</dbReference>
<dbReference type="CDD" id="cd00009">
    <property type="entry name" value="AAA"/>
    <property type="match status" value="1"/>
</dbReference>
<dbReference type="FunFam" id="1.10.10.10:FF:000086">
    <property type="entry name" value="Holliday junction ATP-dependent DNA helicase RuvB"/>
    <property type="match status" value="1"/>
</dbReference>
<dbReference type="FunFam" id="1.10.8.60:FF:000023">
    <property type="entry name" value="Holliday junction ATP-dependent DNA helicase RuvB"/>
    <property type="match status" value="1"/>
</dbReference>
<dbReference type="FunFam" id="3.40.50.300:FF:000073">
    <property type="entry name" value="Holliday junction ATP-dependent DNA helicase RuvB"/>
    <property type="match status" value="1"/>
</dbReference>
<dbReference type="Gene3D" id="1.10.8.60">
    <property type="match status" value="1"/>
</dbReference>
<dbReference type="Gene3D" id="3.40.50.300">
    <property type="entry name" value="P-loop containing nucleotide triphosphate hydrolases"/>
    <property type="match status" value="1"/>
</dbReference>
<dbReference type="Gene3D" id="1.10.10.10">
    <property type="entry name" value="Winged helix-like DNA-binding domain superfamily/Winged helix DNA-binding domain"/>
    <property type="match status" value="1"/>
</dbReference>
<dbReference type="HAMAP" id="MF_00016">
    <property type="entry name" value="DNA_HJ_migration_RuvB"/>
    <property type="match status" value="1"/>
</dbReference>
<dbReference type="InterPro" id="IPR003593">
    <property type="entry name" value="AAA+_ATPase"/>
</dbReference>
<dbReference type="InterPro" id="IPR041445">
    <property type="entry name" value="AAA_lid_4"/>
</dbReference>
<dbReference type="InterPro" id="IPR004605">
    <property type="entry name" value="DNA_helicase_Holl-junc_RuvB"/>
</dbReference>
<dbReference type="InterPro" id="IPR027417">
    <property type="entry name" value="P-loop_NTPase"/>
</dbReference>
<dbReference type="InterPro" id="IPR008824">
    <property type="entry name" value="RuvB-like_N"/>
</dbReference>
<dbReference type="InterPro" id="IPR008823">
    <property type="entry name" value="RuvB_C"/>
</dbReference>
<dbReference type="InterPro" id="IPR036388">
    <property type="entry name" value="WH-like_DNA-bd_sf"/>
</dbReference>
<dbReference type="InterPro" id="IPR036390">
    <property type="entry name" value="WH_DNA-bd_sf"/>
</dbReference>
<dbReference type="NCBIfam" id="NF000868">
    <property type="entry name" value="PRK00080.1"/>
    <property type="match status" value="1"/>
</dbReference>
<dbReference type="NCBIfam" id="TIGR00635">
    <property type="entry name" value="ruvB"/>
    <property type="match status" value="1"/>
</dbReference>
<dbReference type="PANTHER" id="PTHR42848">
    <property type="match status" value="1"/>
</dbReference>
<dbReference type="PANTHER" id="PTHR42848:SF1">
    <property type="entry name" value="HOLLIDAY JUNCTION BRANCH MIGRATION COMPLEX SUBUNIT RUVB"/>
    <property type="match status" value="1"/>
</dbReference>
<dbReference type="Pfam" id="PF17864">
    <property type="entry name" value="AAA_lid_4"/>
    <property type="match status" value="1"/>
</dbReference>
<dbReference type="Pfam" id="PF05491">
    <property type="entry name" value="RuvB_C"/>
    <property type="match status" value="1"/>
</dbReference>
<dbReference type="Pfam" id="PF05496">
    <property type="entry name" value="RuvB_N"/>
    <property type="match status" value="1"/>
</dbReference>
<dbReference type="SMART" id="SM00382">
    <property type="entry name" value="AAA"/>
    <property type="match status" value="1"/>
</dbReference>
<dbReference type="SUPFAM" id="SSF52540">
    <property type="entry name" value="P-loop containing nucleoside triphosphate hydrolases"/>
    <property type="match status" value="1"/>
</dbReference>
<dbReference type="SUPFAM" id="SSF46785">
    <property type="entry name" value="Winged helix' DNA-binding domain"/>
    <property type="match status" value="1"/>
</dbReference>
<reference key="1">
    <citation type="journal article" date="2006" name="Appl. Environ. Microbiol.">
        <title>Complete genome sequence of the marine, chemolithoautotrophic, ammonia-oxidizing bacterium Nitrosococcus oceani ATCC 19707.</title>
        <authorList>
            <person name="Klotz M.G."/>
            <person name="Arp D.J."/>
            <person name="Chain P.S.G."/>
            <person name="El-Sheikh A.F."/>
            <person name="Hauser L.J."/>
            <person name="Hommes N.G."/>
            <person name="Larimer F.W."/>
            <person name="Malfatti S.A."/>
            <person name="Norton J.M."/>
            <person name="Poret-Peterson A.T."/>
            <person name="Vergez L.M."/>
            <person name="Ward B.B."/>
        </authorList>
    </citation>
    <scope>NUCLEOTIDE SEQUENCE [LARGE SCALE GENOMIC DNA]</scope>
    <source>
        <strain>ATCC 19707 / BCRC 17464 / JCM 30415 / NCIMB 11848 / C-107</strain>
    </source>
</reference>
<evidence type="ECO:0000255" key="1">
    <source>
        <dbReference type="HAMAP-Rule" id="MF_00016"/>
    </source>
</evidence>
<accession>Q3JES3</accession>
<proteinExistence type="inferred from homology"/>
<keyword id="KW-0067">ATP-binding</keyword>
<keyword id="KW-0963">Cytoplasm</keyword>
<keyword id="KW-0227">DNA damage</keyword>
<keyword id="KW-0233">DNA recombination</keyword>
<keyword id="KW-0234">DNA repair</keyword>
<keyword id="KW-0238">DNA-binding</keyword>
<keyword id="KW-0378">Hydrolase</keyword>
<keyword id="KW-0547">Nucleotide-binding</keyword>
<keyword id="KW-1185">Reference proteome</keyword>
<comment type="function">
    <text evidence="1">The RuvA-RuvB-RuvC complex processes Holliday junction (HJ) DNA during genetic recombination and DNA repair, while the RuvA-RuvB complex plays an important role in the rescue of blocked DNA replication forks via replication fork reversal (RFR). RuvA specifically binds to HJ cruciform DNA, conferring on it an open structure. The RuvB hexamer acts as an ATP-dependent pump, pulling dsDNA into and through the RuvAB complex. RuvB forms 2 homohexamers on either side of HJ DNA bound by 1 or 2 RuvA tetramers; 4 subunits per hexamer contact DNA at a time. Coordinated motions by a converter formed by DNA-disengaged RuvB subunits stimulates ATP hydrolysis and nucleotide exchange. Immobilization of the converter enables RuvB to convert the ATP-contained energy into a lever motion, pulling 2 nucleotides of DNA out of the RuvA tetramer per ATP hydrolyzed, thus driving DNA branch migration. The RuvB motors rotate together with the DNA substrate, which together with the progressing nucleotide cycle form the mechanistic basis for DNA recombination by continuous HJ branch migration. Branch migration allows RuvC to scan DNA until it finds its consensus sequence, where it cleaves and resolves cruciform DNA.</text>
</comment>
<comment type="catalytic activity">
    <reaction evidence="1">
        <text>ATP + H2O = ADP + phosphate + H(+)</text>
        <dbReference type="Rhea" id="RHEA:13065"/>
        <dbReference type="ChEBI" id="CHEBI:15377"/>
        <dbReference type="ChEBI" id="CHEBI:15378"/>
        <dbReference type="ChEBI" id="CHEBI:30616"/>
        <dbReference type="ChEBI" id="CHEBI:43474"/>
        <dbReference type="ChEBI" id="CHEBI:456216"/>
    </reaction>
</comment>
<comment type="subunit">
    <text evidence="1">Homohexamer. Forms an RuvA(8)-RuvB(12)-Holliday junction (HJ) complex. HJ DNA is sandwiched between 2 RuvA tetramers; dsDNA enters through RuvA and exits via RuvB. An RuvB hexamer assembles on each DNA strand where it exits the tetramer. Each RuvB hexamer is contacted by two RuvA subunits (via domain III) on 2 adjacent RuvB subunits; this complex drives branch migration. In the full resolvosome a probable DNA-RuvA(4)-RuvB(12)-RuvC(2) complex forms which resolves the HJ.</text>
</comment>
<comment type="subcellular location">
    <subcellularLocation>
        <location evidence="1">Cytoplasm</location>
    </subcellularLocation>
</comment>
<comment type="domain">
    <text evidence="1">Has 3 domains, the large (RuvB-L) and small ATPase (RuvB-S) domains and the C-terminal head (RuvB-H) domain. The head domain binds DNA, while the ATPase domains jointly bind ATP, ADP or are empty depending on the state of the subunit in the translocation cycle. During a single DNA translocation step the structure of each domain remains the same, but their relative positions change.</text>
</comment>
<comment type="similarity">
    <text evidence="1">Belongs to the RuvB family.</text>
</comment>
<protein>
    <recommendedName>
        <fullName evidence="1">Holliday junction branch migration complex subunit RuvB</fullName>
        <ecNumber evidence="1">3.6.4.-</ecNumber>
    </recommendedName>
</protein>
<organism>
    <name type="scientific">Nitrosococcus oceani (strain ATCC 19707 / BCRC 17464 / JCM 30415 / NCIMB 11848 / C-107)</name>
    <dbReference type="NCBI Taxonomy" id="323261"/>
    <lineage>
        <taxon>Bacteria</taxon>
        <taxon>Pseudomonadati</taxon>
        <taxon>Pseudomonadota</taxon>
        <taxon>Gammaproteobacteria</taxon>
        <taxon>Chromatiales</taxon>
        <taxon>Chromatiaceae</taxon>
        <taxon>Nitrosococcus</taxon>
    </lineage>
</organism>
<sequence length="348" mass="38788">MTLNRDMVSPQEDRGEKAVEFSLRPARLADYVGQPQVQEQMEVFIPAARARHEALDHVLIFGPPGLGKTTLSHIIANELEVNLRQTSGPVLERPGDLAALLTNLEPRDVLFIDEIHRLSPVVEEVLYPAMEDRQIDIMIGEGPAARSIKLDLVPFTLVGATTRAGLLTSPLRDRFGIVQRLEFYAVDHLVLIVERTARILGMAMEKEGALEIARRSRGTPRIANRLLRRVRDYAEIKGDGQVTRQVAQKALDLLDVDSHGFDTMDRKLLLAMLEKFDGGPVGVDSLAAAIGEERGTIEDVIEPFLLQQGFVMRTPRGRMATRHAYLHFGLKPAVKMVPQEVSDLFPNE</sequence>
<feature type="chain" id="PRO_0000235383" description="Holliday junction branch migration complex subunit RuvB">
    <location>
        <begin position="1"/>
        <end position="348"/>
    </location>
</feature>
<feature type="region of interest" description="Large ATPase domain (RuvB-L)" evidence="1">
    <location>
        <begin position="1"/>
        <end position="184"/>
    </location>
</feature>
<feature type="region of interest" description="Small ATPAse domain (RuvB-S)" evidence="1">
    <location>
        <begin position="185"/>
        <end position="255"/>
    </location>
</feature>
<feature type="region of interest" description="Head domain (RuvB-H)" evidence="1">
    <location>
        <begin position="258"/>
        <end position="348"/>
    </location>
</feature>
<feature type="binding site" evidence="1">
    <location>
        <position position="23"/>
    </location>
    <ligand>
        <name>ATP</name>
        <dbReference type="ChEBI" id="CHEBI:30616"/>
    </ligand>
</feature>
<feature type="binding site" evidence="1">
    <location>
        <position position="24"/>
    </location>
    <ligand>
        <name>ATP</name>
        <dbReference type="ChEBI" id="CHEBI:30616"/>
    </ligand>
</feature>
<feature type="binding site" evidence="1">
    <location>
        <position position="65"/>
    </location>
    <ligand>
        <name>ATP</name>
        <dbReference type="ChEBI" id="CHEBI:30616"/>
    </ligand>
</feature>
<feature type="binding site" evidence="1">
    <location>
        <position position="68"/>
    </location>
    <ligand>
        <name>ATP</name>
        <dbReference type="ChEBI" id="CHEBI:30616"/>
    </ligand>
</feature>
<feature type="binding site" evidence="1">
    <location>
        <position position="69"/>
    </location>
    <ligand>
        <name>ATP</name>
        <dbReference type="ChEBI" id="CHEBI:30616"/>
    </ligand>
</feature>
<feature type="binding site" evidence="1">
    <location>
        <position position="69"/>
    </location>
    <ligand>
        <name>Mg(2+)</name>
        <dbReference type="ChEBI" id="CHEBI:18420"/>
    </ligand>
</feature>
<feature type="binding site" evidence="1">
    <location>
        <position position="70"/>
    </location>
    <ligand>
        <name>ATP</name>
        <dbReference type="ChEBI" id="CHEBI:30616"/>
    </ligand>
</feature>
<feature type="binding site" evidence="1">
    <location>
        <position position="174"/>
    </location>
    <ligand>
        <name>ATP</name>
        <dbReference type="ChEBI" id="CHEBI:30616"/>
    </ligand>
</feature>
<feature type="binding site" evidence="1">
    <location>
        <position position="184"/>
    </location>
    <ligand>
        <name>ATP</name>
        <dbReference type="ChEBI" id="CHEBI:30616"/>
    </ligand>
</feature>
<feature type="binding site" evidence="1">
    <location>
        <position position="221"/>
    </location>
    <ligand>
        <name>ATP</name>
        <dbReference type="ChEBI" id="CHEBI:30616"/>
    </ligand>
</feature>
<feature type="binding site" evidence="1">
    <location>
        <position position="294"/>
    </location>
    <ligand>
        <name>DNA</name>
        <dbReference type="ChEBI" id="CHEBI:16991"/>
    </ligand>
</feature>
<feature type="binding site" evidence="1">
    <location>
        <position position="313"/>
    </location>
    <ligand>
        <name>DNA</name>
        <dbReference type="ChEBI" id="CHEBI:16991"/>
    </ligand>
</feature>
<feature type="binding site" evidence="1">
    <location>
        <position position="318"/>
    </location>
    <ligand>
        <name>DNA</name>
        <dbReference type="ChEBI" id="CHEBI:16991"/>
    </ligand>
</feature>